<protein>
    <recommendedName>
        <fullName>Heterogeneous nuclear ribonucleoprotein A1</fullName>
        <shortName>hnRNP A1</shortName>
    </recommendedName>
    <alternativeName>
        <fullName>PEN repeat clone P9</fullName>
    </alternativeName>
    <alternativeName>
        <fullName>hnRNP core protein A1-A</fullName>
    </alternativeName>
</protein>
<reference key="1">
    <citation type="journal article" date="1987" name="Proc. Natl. Acad. Sci. U.S.A.">
        <title>Pen repeat sequences are GGN clusters and encode a glycine-rich domain in a Drosophila cDNA homologous to the rat helix destabilizing protein.</title>
        <authorList>
            <person name="Haynes S.R."/>
            <person name="Rebbert M.L."/>
            <person name="Mozer B.A."/>
            <person name="Forquignon F."/>
            <person name="Dawid I.B."/>
        </authorList>
    </citation>
    <scope>NUCLEOTIDE SEQUENCE [MRNA] (ISOFORM B)</scope>
    <source>
        <strain>Oregon-R</strain>
        <tissue>Pupae</tissue>
    </source>
</reference>
<reference key="2">
    <citation type="journal article" date="1990" name="Mol. Cell. Biol.">
        <title>The Drosophila Hrb98DE locus encodes four protein isoforms homologous to the A1 protein of mammalian heterogeneous nuclear ribonucleoprotein complexes.</title>
        <authorList>
            <person name="Haynes S.R."/>
            <person name="Raychaudhuri G."/>
            <person name="Beyer A.L."/>
        </authorList>
    </citation>
    <scope>NUCLEOTIDE SEQUENCE [GENOMIC DNA / MRNA] (ISOFORMS A; B; D AND E)</scope>
    <scope>DEVELOPMENTAL STAGE</scope>
    <source>
        <strain>Canton-S</strain>
        <strain>Oregon-R</strain>
        <tissue>Embryo</tissue>
        <tissue>Ovary</tissue>
        <tissue>Pupae</tissue>
    </source>
</reference>
<reference key="3">
    <citation type="journal article" date="2000" name="Science">
        <title>The genome sequence of Drosophila melanogaster.</title>
        <authorList>
            <person name="Adams M.D."/>
            <person name="Celniker S.E."/>
            <person name="Holt R.A."/>
            <person name="Evans C.A."/>
            <person name="Gocayne J.D."/>
            <person name="Amanatides P.G."/>
            <person name="Scherer S.E."/>
            <person name="Li P.W."/>
            <person name="Hoskins R.A."/>
            <person name="Galle R.F."/>
            <person name="George R.A."/>
            <person name="Lewis S.E."/>
            <person name="Richards S."/>
            <person name="Ashburner M."/>
            <person name="Henderson S.N."/>
            <person name="Sutton G.G."/>
            <person name="Wortman J.R."/>
            <person name="Yandell M.D."/>
            <person name="Zhang Q."/>
            <person name="Chen L.X."/>
            <person name="Brandon R.C."/>
            <person name="Rogers Y.-H.C."/>
            <person name="Blazej R.G."/>
            <person name="Champe M."/>
            <person name="Pfeiffer B.D."/>
            <person name="Wan K.H."/>
            <person name="Doyle C."/>
            <person name="Baxter E.G."/>
            <person name="Helt G."/>
            <person name="Nelson C.R."/>
            <person name="Miklos G.L.G."/>
            <person name="Abril J.F."/>
            <person name="Agbayani A."/>
            <person name="An H.-J."/>
            <person name="Andrews-Pfannkoch C."/>
            <person name="Baldwin D."/>
            <person name="Ballew R.M."/>
            <person name="Basu A."/>
            <person name="Baxendale J."/>
            <person name="Bayraktaroglu L."/>
            <person name="Beasley E.M."/>
            <person name="Beeson K.Y."/>
            <person name="Benos P.V."/>
            <person name="Berman B.P."/>
            <person name="Bhandari D."/>
            <person name="Bolshakov S."/>
            <person name="Borkova D."/>
            <person name="Botchan M.R."/>
            <person name="Bouck J."/>
            <person name="Brokstein P."/>
            <person name="Brottier P."/>
            <person name="Burtis K.C."/>
            <person name="Busam D.A."/>
            <person name="Butler H."/>
            <person name="Cadieu E."/>
            <person name="Center A."/>
            <person name="Chandra I."/>
            <person name="Cherry J.M."/>
            <person name="Cawley S."/>
            <person name="Dahlke C."/>
            <person name="Davenport L.B."/>
            <person name="Davies P."/>
            <person name="de Pablos B."/>
            <person name="Delcher A."/>
            <person name="Deng Z."/>
            <person name="Mays A.D."/>
            <person name="Dew I."/>
            <person name="Dietz S.M."/>
            <person name="Dodson K."/>
            <person name="Doup L.E."/>
            <person name="Downes M."/>
            <person name="Dugan-Rocha S."/>
            <person name="Dunkov B.C."/>
            <person name="Dunn P."/>
            <person name="Durbin K.J."/>
            <person name="Evangelista C.C."/>
            <person name="Ferraz C."/>
            <person name="Ferriera S."/>
            <person name="Fleischmann W."/>
            <person name="Fosler C."/>
            <person name="Gabrielian A.E."/>
            <person name="Garg N.S."/>
            <person name="Gelbart W.M."/>
            <person name="Glasser K."/>
            <person name="Glodek A."/>
            <person name="Gong F."/>
            <person name="Gorrell J.H."/>
            <person name="Gu Z."/>
            <person name="Guan P."/>
            <person name="Harris M."/>
            <person name="Harris N.L."/>
            <person name="Harvey D.A."/>
            <person name="Heiman T.J."/>
            <person name="Hernandez J.R."/>
            <person name="Houck J."/>
            <person name="Hostin D."/>
            <person name="Houston K.A."/>
            <person name="Howland T.J."/>
            <person name="Wei M.-H."/>
            <person name="Ibegwam C."/>
            <person name="Jalali M."/>
            <person name="Kalush F."/>
            <person name="Karpen G.H."/>
            <person name="Ke Z."/>
            <person name="Kennison J.A."/>
            <person name="Ketchum K.A."/>
            <person name="Kimmel B.E."/>
            <person name="Kodira C.D."/>
            <person name="Kraft C.L."/>
            <person name="Kravitz S."/>
            <person name="Kulp D."/>
            <person name="Lai Z."/>
            <person name="Lasko P."/>
            <person name="Lei Y."/>
            <person name="Levitsky A.A."/>
            <person name="Li J.H."/>
            <person name="Li Z."/>
            <person name="Liang Y."/>
            <person name="Lin X."/>
            <person name="Liu X."/>
            <person name="Mattei B."/>
            <person name="McIntosh T.C."/>
            <person name="McLeod M.P."/>
            <person name="McPherson D."/>
            <person name="Merkulov G."/>
            <person name="Milshina N.V."/>
            <person name="Mobarry C."/>
            <person name="Morris J."/>
            <person name="Moshrefi A."/>
            <person name="Mount S.M."/>
            <person name="Moy M."/>
            <person name="Murphy B."/>
            <person name="Murphy L."/>
            <person name="Muzny D.M."/>
            <person name="Nelson D.L."/>
            <person name="Nelson D.R."/>
            <person name="Nelson K.A."/>
            <person name="Nixon K."/>
            <person name="Nusskern D.R."/>
            <person name="Pacleb J.M."/>
            <person name="Palazzolo M."/>
            <person name="Pittman G.S."/>
            <person name="Pan S."/>
            <person name="Pollard J."/>
            <person name="Puri V."/>
            <person name="Reese M.G."/>
            <person name="Reinert K."/>
            <person name="Remington K."/>
            <person name="Saunders R.D.C."/>
            <person name="Scheeler F."/>
            <person name="Shen H."/>
            <person name="Shue B.C."/>
            <person name="Siden-Kiamos I."/>
            <person name="Simpson M."/>
            <person name="Skupski M.P."/>
            <person name="Smith T.J."/>
            <person name="Spier E."/>
            <person name="Spradling A.C."/>
            <person name="Stapleton M."/>
            <person name="Strong R."/>
            <person name="Sun E."/>
            <person name="Svirskas R."/>
            <person name="Tector C."/>
            <person name="Turner R."/>
            <person name="Venter E."/>
            <person name="Wang A.H."/>
            <person name="Wang X."/>
            <person name="Wang Z.-Y."/>
            <person name="Wassarman D.A."/>
            <person name="Weinstock G.M."/>
            <person name="Weissenbach J."/>
            <person name="Williams S.M."/>
            <person name="Woodage T."/>
            <person name="Worley K.C."/>
            <person name="Wu D."/>
            <person name="Yang S."/>
            <person name="Yao Q.A."/>
            <person name="Ye J."/>
            <person name="Yeh R.-F."/>
            <person name="Zaveri J.S."/>
            <person name="Zhan M."/>
            <person name="Zhang G."/>
            <person name="Zhao Q."/>
            <person name="Zheng L."/>
            <person name="Zheng X.H."/>
            <person name="Zhong F.N."/>
            <person name="Zhong W."/>
            <person name="Zhou X."/>
            <person name="Zhu S.C."/>
            <person name="Zhu X."/>
            <person name="Smith H.O."/>
            <person name="Gibbs R.A."/>
            <person name="Myers E.W."/>
            <person name="Rubin G.M."/>
            <person name="Venter J.C."/>
        </authorList>
    </citation>
    <scope>NUCLEOTIDE SEQUENCE [LARGE SCALE GENOMIC DNA]</scope>
    <source>
        <strain>Berkeley</strain>
    </source>
</reference>
<reference key="4">
    <citation type="journal article" date="2002" name="Genome Biol.">
        <title>Annotation of the Drosophila melanogaster euchromatic genome: a systematic review.</title>
        <authorList>
            <person name="Misra S."/>
            <person name="Crosby M.A."/>
            <person name="Mungall C.J."/>
            <person name="Matthews B.B."/>
            <person name="Campbell K.S."/>
            <person name="Hradecky P."/>
            <person name="Huang Y."/>
            <person name="Kaminker J.S."/>
            <person name="Millburn G.H."/>
            <person name="Prochnik S.E."/>
            <person name="Smith C.D."/>
            <person name="Tupy J.L."/>
            <person name="Whitfield E.J."/>
            <person name="Bayraktaroglu L."/>
            <person name="Berman B.P."/>
            <person name="Bettencourt B.R."/>
            <person name="Celniker S.E."/>
            <person name="de Grey A.D.N.J."/>
            <person name="Drysdale R.A."/>
            <person name="Harris N.L."/>
            <person name="Richter J."/>
            <person name="Russo S."/>
            <person name="Schroeder A.J."/>
            <person name="Shu S.Q."/>
            <person name="Stapleton M."/>
            <person name="Yamada C."/>
            <person name="Ashburner M."/>
            <person name="Gelbart W.M."/>
            <person name="Rubin G.M."/>
            <person name="Lewis S.E."/>
        </authorList>
    </citation>
    <scope>GENOME REANNOTATION</scope>
    <scope>ALTERNATIVE SPLICING</scope>
    <source>
        <strain>Berkeley</strain>
    </source>
</reference>
<reference key="5">
    <citation type="journal article" date="2002" name="Genome Biol.">
        <title>A Drosophila full-length cDNA resource.</title>
        <authorList>
            <person name="Stapleton M."/>
            <person name="Carlson J.W."/>
            <person name="Brokstein P."/>
            <person name="Yu C."/>
            <person name="Champe M."/>
            <person name="George R.A."/>
            <person name="Guarin H."/>
            <person name="Kronmiller B."/>
            <person name="Pacleb J.M."/>
            <person name="Park S."/>
            <person name="Wan K.H."/>
            <person name="Rubin G.M."/>
            <person name="Celniker S.E."/>
        </authorList>
    </citation>
    <scope>NUCLEOTIDE SEQUENCE [LARGE SCALE MRNA] (ISOFORM D)</scope>
    <source>
        <strain>Berkeley</strain>
        <tissue>Embryo</tissue>
    </source>
</reference>
<keyword id="KW-0025">Alternative splicing</keyword>
<keyword id="KW-0539">Nucleus</keyword>
<keyword id="KW-1185">Reference proteome</keyword>
<keyword id="KW-0677">Repeat</keyword>
<keyword id="KW-0687">Ribonucleoprotein</keyword>
<keyword id="KW-0694">RNA-binding</keyword>
<dbReference type="EMBL" id="M15766">
    <property type="protein sequence ID" value="AAA70426.1"/>
    <property type="molecule type" value="mRNA"/>
</dbReference>
<dbReference type="EMBL" id="M25545">
    <property type="protein sequence ID" value="AAA28621.1"/>
    <property type="molecule type" value="Genomic_DNA"/>
</dbReference>
<dbReference type="EMBL" id="M28871">
    <property type="protein sequence ID" value="AAA28621.1"/>
    <property type="status" value="JOINED"/>
    <property type="molecule type" value="Genomic_DNA"/>
</dbReference>
<dbReference type="EMBL" id="M28872">
    <property type="protein sequence ID" value="AAA28621.1"/>
    <property type="status" value="JOINED"/>
    <property type="molecule type" value="Genomic_DNA"/>
</dbReference>
<dbReference type="EMBL" id="M33955">
    <property type="protein sequence ID" value="AAA28621.1"/>
    <property type="status" value="JOINED"/>
    <property type="molecule type" value="Genomic_DNA"/>
</dbReference>
<dbReference type="EMBL" id="M31560">
    <property type="protein sequence ID" value="AAA28621.1"/>
    <property type="status" value="JOINED"/>
    <property type="molecule type" value="Genomic_DNA"/>
</dbReference>
<dbReference type="EMBL" id="M25545">
    <property type="protein sequence ID" value="AAA28622.1"/>
    <property type="molecule type" value="Genomic_DNA"/>
</dbReference>
<dbReference type="EMBL" id="M28870">
    <property type="protein sequence ID" value="AAA28622.1"/>
    <property type="status" value="JOINED"/>
    <property type="molecule type" value="Genomic_DNA"/>
</dbReference>
<dbReference type="EMBL" id="M28872">
    <property type="protein sequence ID" value="AAA28622.1"/>
    <property type="status" value="JOINED"/>
    <property type="molecule type" value="Genomic_DNA"/>
</dbReference>
<dbReference type="EMBL" id="M33955">
    <property type="protein sequence ID" value="AAA28622.1"/>
    <property type="status" value="JOINED"/>
    <property type="molecule type" value="Genomic_DNA"/>
</dbReference>
<dbReference type="EMBL" id="M31560">
    <property type="protein sequence ID" value="AAA28622.1"/>
    <property type="status" value="JOINED"/>
    <property type="molecule type" value="Genomic_DNA"/>
</dbReference>
<dbReference type="EMBL" id="M25545">
    <property type="protein sequence ID" value="AAA28623.1"/>
    <property type="molecule type" value="Genomic_DNA"/>
</dbReference>
<dbReference type="EMBL" id="M28870">
    <property type="protein sequence ID" value="AAA28623.1"/>
    <property type="status" value="JOINED"/>
    <property type="molecule type" value="Genomic_DNA"/>
</dbReference>
<dbReference type="EMBL" id="M28872">
    <property type="protein sequence ID" value="AAA28623.1"/>
    <property type="status" value="JOINED"/>
    <property type="molecule type" value="Genomic_DNA"/>
</dbReference>
<dbReference type="EMBL" id="M33955">
    <property type="protein sequence ID" value="AAA28623.1"/>
    <property type="status" value="JOINED"/>
    <property type="molecule type" value="Genomic_DNA"/>
</dbReference>
<dbReference type="EMBL" id="M31560">
    <property type="protein sequence ID" value="AAA28623.1"/>
    <property type="status" value="JOINED"/>
    <property type="molecule type" value="Genomic_DNA"/>
</dbReference>
<dbReference type="EMBL" id="M25545">
    <property type="protein sequence ID" value="AAA28624.1"/>
    <property type="molecule type" value="Genomic_DNA"/>
</dbReference>
<dbReference type="EMBL" id="M28871">
    <property type="protein sequence ID" value="AAA28624.1"/>
    <property type="status" value="JOINED"/>
    <property type="molecule type" value="Genomic_DNA"/>
</dbReference>
<dbReference type="EMBL" id="M28872">
    <property type="protein sequence ID" value="AAA28624.1"/>
    <property type="status" value="JOINED"/>
    <property type="molecule type" value="Genomic_DNA"/>
</dbReference>
<dbReference type="EMBL" id="M33955">
    <property type="protein sequence ID" value="AAA28624.1"/>
    <property type="status" value="JOINED"/>
    <property type="molecule type" value="Genomic_DNA"/>
</dbReference>
<dbReference type="EMBL" id="M31560">
    <property type="protein sequence ID" value="AAA28624.1"/>
    <property type="status" value="JOINED"/>
    <property type="molecule type" value="Genomic_DNA"/>
</dbReference>
<dbReference type="EMBL" id="AE014297">
    <property type="protein sequence ID" value="AAF56800.2"/>
    <property type="molecule type" value="Genomic_DNA"/>
</dbReference>
<dbReference type="EMBL" id="AE014297">
    <property type="protein sequence ID" value="AAF56801.1"/>
    <property type="molecule type" value="Genomic_DNA"/>
</dbReference>
<dbReference type="EMBL" id="AE014297">
    <property type="protein sequence ID" value="AAN14141.1"/>
    <property type="molecule type" value="Genomic_DNA"/>
</dbReference>
<dbReference type="EMBL" id="AE014297">
    <property type="protein sequence ID" value="AAN14143.1"/>
    <property type="molecule type" value="Genomic_DNA"/>
</dbReference>
<dbReference type="EMBL" id="AY061448">
    <property type="protein sequence ID" value="AAL28996.1"/>
    <property type="molecule type" value="mRNA"/>
</dbReference>
<dbReference type="PIR" id="A26459">
    <property type="entry name" value="A26459"/>
</dbReference>
<dbReference type="RefSeq" id="NP_524543.1">
    <molecule id="P07909-1"/>
    <property type="nucleotide sequence ID" value="NM_079819.3"/>
</dbReference>
<dbReference type="RefSeq" id="NP_733249.1">
    <molecule id="P07909-2"/>
    <property type="nucleotide sequence ID" value="NM_170370.2"/>
</dbReference>
<dbReference type="RefSeq" id="NP_733250.1">
    <molecule id="P07909-3"/>
    <property type="nucleotide sequence ID" value="NM_170371.2"/>
</dbReference>
<dbReference type="RefSeq" id="NP_733251.1">
    <molecule id="P07909-1"/>
    <property type="nucleotide sequence ID" value="NM_170372.2"/>
</dbReference>
<dbReference type="RefSeq" id="NP_733252.1">
    <molecule id="P07909-4"/>
    <property type="nucleotide sequence ID" value="NM_170373.2"/>
</dbReference>
<dbReference type="RefSeq" id="NP_733253.1">
    <molecule id="P07909-4"/>
    <property type="nucleotide sequence ID" value="NM_170374.2"/>
</dbReference>
<dbReference type="SMR" id="P07909"/>
<dbReference type="BioGRID" id="68261">
    <property type="interactions" value="34"/>
</dbReference>
<dbReference type="DIP" id="DIP-19217N"/>
<dbReference type="FunCoup" id="P07909">
    <property type="interactions" value="1921"/>
</dbReference>
<dbReference type="IntAct" id="P07909">
    <property type="interactions" value="10"/>
</dbReference>
<dbReference type="STRING" id="7227.FBpp0084670"/>
<dbReference type="PaxDb" id="7227-FBpp0084669"/>
<dbReference type="DNASU" id="43385"/>
<dbReference type="EnsemblMetazoa" id="FBtr0085298">
    <molecule id="P07909-2"/>
    <property type="protein sequence ID" value="FBpp0084667"/>
    <property type="gene ID" value="FBgn0001215"/>
</dbReference>
<dbReference type="EnsemblMetazoa" id="FBtr0085299">
    <molecule id="P07909-3"/>
    <property type="protein sequence ID" value="FBpp0084668"/>
    <property type="gene ID" value="FBgn0001215"/>
</dbReference>
<dbReference type="EnsemblMetazoa" id="FBtr0085300">
    <molecule id="P07909-1"/>
    <property type="protein sequence ID" value="FBpp0084669"/>
    <property type="gene ID" value="FBgn0001215"/>
</dbReference>
<dbReference type="EnsemblMetazoa" id="FBtr0085301">
    <molecule id="P07909-1"/>
    <property type="protein sequence ID" value="FBpp0084670"/>
    <property type="gene ID" value="FBgn0001215"/>
</dbReference>
<dbReference type="EnsemblMetazoa" id="FBtr0085302">
    <molecule id="P07909-4"/>
    <property type="protein sequence ID" value="FBpp0084671"/>
    <property type="gene ID" value="FBgn0001215"/>
</dbReference>
<dbReference type="EnsemblMetazoa" id="FBtr0085303">
    <molecule id="P07909-4"/>
    <property type="protein sequence ID" value="FBpp0084672"/>
    <property type="gene ID" value="FBgn0001215"/>
</dbReference>
<dbReference type="GeneID" id="43385"/>
<dbReference type="KEGG" id="dme:Dmel_CG9983"/>
<dbReference type="AGR" id="FB:FBgn0001215"/>
<dbReference type="CTD" id="43385"/>
<dbReference type="FlyBase" id="FBgn0001215">
    <property type="gene designation" value="Hrb98DE"/>
</dbReference>
<dbReference type="VEuPathDB" id="VectorBase:FBgn0001215"/>
<dbReference type="eggNOG" id="KOG0118">
    <property type="taxonomic scope" value="Eukaryota"/>
</dbReference>
<dbReference type="GeneTree" id="ENSGT00940000167175"/>
<dbReference type="HOGENOM" id="CLU_012062_1_3_1"/>
<dbReference type="InParanoid" id="P07909"/>
<dbReference type="OMA" id="AQFTKHF"/>
<dbReference type="OrthoDB" id="1875751at2759"/>
<dbReference type="PhylomeDB" id="P07909"/>
<dbReference type="SignaLink" id="P07909"/>
<dbReference type="BioGRID-ORCS" id="43385">
    <property type="hits" value="0 hits in 1 CRISPR screen"/>
</dbReference>
<dbReference type="ChiTaRS" id="Hrb98DE">
    <property type="organism name" value="fly"/>
</dbReference>
<dbReference type="GenomeRNAi" id="43385"/>
<dbReference type="PRO" id="PR:P07909"/>
<dbReference type="Proteomes" id="UP000000803">
    <property type="component" value="Chromosome 3R"/>
</dbReference>
<dbReference type="Bgee" id="FBgn0001215">
    <property type="expression patterns" value="Expressed in eye disc (Drosophila) and 285 other cell types or tissues"/>
</dbReference>
<dbReference type="ExpressionAtlas" id="P07909">
    <property type="expression patterns" value="baseline and differential"/>
</dbReference>
<dbReference type="GO" id="GO:0005634">
    <property type="term" value="C:nucleus"/>
    <property type="evidence" value="ECO:0000314"/>
    <property type="project" value="FlyBase"/>
</dbReference>
<dbReference type="GO" id="GO:0005703">
    <property type="term" value="C:polytene chromosome puff"/>
    <property type="evidence" value="ECO:0000314"/>
    <property type="project" value="FlyBase"/>
</dbReference>
<dbReference type="GO" id="GO:1990904">
    <property type="term" value="C:ribonucleoprotein complex"/>
    <property type="evidence" value="ECO:0000314"/>
    <property type="project" value="FlyBase"/>
</dbReference>
<dbReference type="GO" id="GO:0003730">
    <property type="term" value="F:mRNA 3'-UTR binding"/>
    <property type="evidence" value="ECO:0000318"/>
    <property type="project" value="GO_Central"/>
</dbReference>
<dbReference type="GO" id="GO:0048027">
    <property type="term" value="F:mRNA 5'-UTR binding"/>
    <property type="evidence" value="ECO:0000314"/>
    <property type="project" value="FlyBase"/>
</dbReference>
<dbReference type="GO" id="GO:0003729">
    <property type="term" value="F:mRNA binding"/>
    <property type="evidence" value="ECO:0000250"/>
    <property type="project" value="FlyBase"/>
</dbReference>
<dbReference type="GO" id="GO:0034046">
    <property type="term" value="F:poly(G) binding"/>
    <property type="evidence" value="ECO:0000318"/>
    <property type="project" value="GO_Central"/>
</dbReference>
<dbReference type="GO" id="GO:0043565">
    <property type="term" value="F:sequence-specific DNA binding"/>
    <property type="evidence" value="ECO:0000314"/>
    <property type="project" value="FlyBase"/>
</dbReference>
<dbReference type="GO" id="GO:0001745">
    <property type="term" value="P:compound eye morphogenesis"/>
    <property type="evidence" value="ECO:0000316"/>
    <property type="project" value="FlyBase"/>
</dbReference>
<dbReference type="GO" id="GO:0036099">
    <property type="term" value="P:female germ-line stem cell population maintenance"/>
    <property type="evidence" value="ECO:0000315"/>
    <property type="project" value="FlyBase"/>
</dbReference>
<dbReference type="GO" id="GO:0033119">
    <property type="term" value="P:negative regulation of RNA splicing"/>
    <property type="evidence" value="ECO:0000315"/>
    <property type="project" value="FlyBase"/>
</dbReference>
<dbReference type="GO" id="GO:0048477">
    <property type="term" value="P:oogenesis"/>
    <property type="evidence" value="ECO:0000315"/>
    <property type="project" value="FlyBase"/>
</dbReference>
<dbReference type="GO" id="GO:0048026">
    <property type="term" value="P:positive regulation of mRNA splicing, via spliceosome"/>
    <property type="evidence" value="ECO:0000318"/>
    <property type="project" value="GO_Central"/>
</dbReference>
<dbReference type="GO" id="GO:0045727">
    <property type="term" value="P:positive regulation of translation"/>
    <property type="evidence" value="ECO:0000315"/>
    <property type="project" value="FlyBase"/>
</dbReference>
<dbReference type="GO" id="GO:0000381">
    <property type="term" value="P:regulation of alternative mRNA splicing, via spliceosome"/>
    <property type="evidence" value="ECO:0000315"/>
    <property type="project" value="FlyBase"/>
</dbReference>
<dbReference type="CDD" id="cd12578">
    <property type="entry name" value="RRM1_hnRNPA_like"/>
    <property type="match status" value="1"/>
</dbReference>
<dbReference type="FunFam" id="3.30.70.330:FF:000456">
    <property type="entry name" value="Heterogeneous nuclear ribonucleoprotein A1"/>
    <property type="match status" value="1"/>
</dbReference>
<dbReference type="FunFam" id="3.30.70.330:FF:000040">
    <property type="entry name" value="Heterogeneous nuclear ribonucleoprotein A2/B1"/>
    <property type="match status" value="1"/>
</dbReference>
<dbReference type="Gene3D" id="3.30.70.330">
    <property type="match status" value="2"/>
</dbReference>
<dbReference type="InterPro" id="IPR012677">
    <property type="entry name" value="Nucleotide-bd_a/b_plait_sf"/>
</dbReference>
<dbReference type="InterPro" id="IPR035979">
    <property type="entry name" value="RBD_domain_sf"/>
</dbReference>
<dbReference type="InterPro" id="IPR000504">
    <property type="entry name" value="RRM_dom"/>
</dbReference>
<dbReference type="PANTHER" id="PTHR48026:SF14">
    <property type="entry name" value="HETEROGENEOUS NUCLEAR RIBONUCLEOPROTEIN A1"/>
    <property type="match status" value="1"/>
</dbReference>
<dbReference type="PANTHER" id="PTHR48026">
    <property type="entry name" value="HOMOLOGOUS TO DROSOPHILA SQD (SQUID) PROTEIN"/>
    <property type="match status" value="1"/>
</dbReference>
<dbReference type="Pfam" id="PF00076">
    <property type="entry name" value="RRM_1"/>
    <property type="match status" value="2"/>
</dbReference>
<dbReference type="SMART" id="SM00360">
    <property type="entry name" value="RRM"/>
    <property type="match status" value="2"/>
</dbReference>
<dbReference type="SUPFAM" id="SSF54928">
    <property type="entry name" value="RNA-binding domain, RBD"/>
    <property type="match status" value="2"/>
</dbReference>
<dbReference type="PROSITE" id="PS50102">
    <property type="entry name" value="RRM"/>
    <property type="match status" value="2"/>
</dbReference>
<sequence length="365" mass="39038">MVNSNQNQNGNSNGHDDDFPQDSITEPEHMRKLFIGGLDYRTTDENLKAHFEKWGNIVDVVVMKDPRTKRSRGFGFITYSHSSMIDEAQKSRPHKIDGRVVEPKRAVPRQDIDSPNAGATVKKLFVGALKDDHDEQSIRDYFQHFGNIVDINIVIDKETGKKRGFAFVEFDDYDPVDKVVLQKQHQLNGKMVDVKKALPKQNDQQGGGGGRGGPGGRAGGNRGNMGGGNYGNQNGGGNWNNGGNNWGNNRGGNDNWGNNSFGGGGGGGGGYGGGNNSWGNNNPWDNGNGGGNFGGGGNNWNNGGNDFGGYQQNYGGGPQRGGGNFNNNRMQPYQGGGGFKAGGGNQGNYGGNNQGFNNGGNNRRY</sequence>
<proteinExistence type="evidence at transcript level"/>
<feature type="chain" id="PRO_0000081834" description="Heterogeneous nuclear ribonucleoprotein A1">
    <location>
        <begin position="1"/>
        <end position="365"/>
    </location>
</feature>
<feature type="domain" description="RRM 1" evidence="2">
    <location>
        <begin position="31"/>
        <end position="107"/>
    </location>
</feature>
<feature type="domain" description="RRM 2" evidence="2">
    <location>
        <begin position="122"/>
        <end position="199"/>
    </location>
</feature>
<feature type="region of interest" description="Disordered" evidence="3">
    <location>
        <begin position="1"/>
        <end position="24"/>
    </location>
</feature>
<feature type="region of interest" description="Disordered" evidence="3">
    <location>
        <begin position="191"/>
        <end position="261"/>
    </location>
</feature>
<feature type="region of interest" description="Disordered" evidence="3">
    <location>
        <begin position="276"/>
        <end position="365"/>
    </location>
</feature>
<feature type="compositionally biased region" description="Low complexity" evidence="3">
    <location>
        <begin position="1"/>
        <end position="13"/>
    </location>
</feature>
<feature type="compositionally biased region" description="Gly residues" evidence="3">
    <location>
        <begin position="205"/>
        <end position="240"/>
    </location>
</feature>
<feature type="compositionally biased region" description="Low complexity" evidence="3">
    <location>
        <begin position="241"/>
        <end position="259"/>
    </location>
</feature>
<feature type="compositionally biased region" description="Low complexity" evidence="3">
    <location>
        <begin position="277"/>
        <end position="286"/>
    </location>
</feature>
<feature type="compositionally biased region" description="Gly residues" evidence="3">
    <location>
        <begin position="287"/>
        <end position="298"/>
    </location>
</feature>
<feature type="compositionally biased region" description="Low complexity" evidence="3">
    <location>
        <begin position="299"/>
        <end position="313"/>
    </location>
</feature>
<feature type="compositionally biased region" description="Gly residues" evidence="3">
    <location>
        <begin position="314"/>
        <end position="324"/>
    </location>
</feature>
<feature type="compositionally biased region" description="Gly residues" evidence="3">
    <location>
        <begin position="334"/>
        <end position="353"/>
    </location>
</feature>
<feature type="compositionally biased region" description="Low complexity" evidence="3">
    <location>
        <begin position="354"/>
        <end position="365"/>
    </location>
</feature>
<feature type="splice variant" id="VSP_005828" description="In isoform E." evidence="6">
    <original>MVNSNQNQNGNSNGHDDDFPQ</original>
    <variation>MGGHDNWNNGQNEEQD</variation>
    <location>
        <begin position="1"/>
        <end position="21"/>
    </location>
</feature>
<feature type="splice variant" id="VSP_005827" description="In isoform A." evidence="6">
    <original>MVNSNQNQNGNSNGHD</original>
    <variation>MGGHDNWNNGQNEEQ</variation>
    <location>
        <begin position="1"/>
        <end position="16"/>
    </location>
</feature>
<feature type="splice variant" id="VSP_005829" description="In isoform D." evidence="5 6">
    <location>
        <begin position="18"/>
        <end position="21"/>
    </location>
</feature>
<gene>
    <name type="primary">Hrb98DE</name>
    <name type="synonym">Pen9</name>
    <name type="ORF">CG9983</name>
</gene>
<accession>P07909</accession>
<accession>Q24359</accession>
<accession>Q24360</accession>
<accession>Q99361</accession>
<accession>Q9VAU7</accession>
<accession>Q9VAU8</accession>
<comment type="function">
    <text>This protein is a component of ribonucleosomes.</text>
</comment>
<comment type="subcellular location">
    <subcellularLocation>
        <location evidence="1">Nucleus</location>
    </subcellularLocation>
</comment>
<comment type="alternative products">
    <event type="alternative splicing"/>
    <isoform>
        <id>P07909-1</id>
        <name>B</name>
        <name>C</name>
        <sequence type="displayed"/>
    </isoform>
    <isoform>
        <id>P07909-2</id>
        <name>A</name>
        <sequence type="described" ref="VSP_005827"/>
    </isoform>
    <isoform>
        <id>P07909-3</id>
        <name>E</name>
        <sequence type="described" ref="VSP_005828"/>
    </isoform>
    <isoform>
        <id>P07909-4</id>
        <name>D</name>
        <name>F</name>
        <sequence type="described" ref="VSP_005829"/>
    </isoform>
</comment>
<comment type="developmental stage">
    <text evidence="4">Expressed both maternally and zygotically. Highest zygotic expression found in adult females and pupae.</text>
</comment>
<organism>
    <name type="scientific">Drosophila melanogaster</name>
    <name type="common">Fruit fly</name>
    <dbReference type="NCBI Taxonomy" id="7227"/>
    <lineage>
        <taxon>Eukaryota</taxon>
        <taxon>Metazoa</taxon>
        <taxon>Ecdysozoa</taxon>
        <taxon>Arthropoda</taxon>
        <taxon>Hexapoda</taxon>
        <taxon>Insecta</taxon>
        <taxon>Pterygota</taxon>
        <taxon>Neoptera</taxon>
        <taxon>Endopterygota</taxon>
        <taxon>Diptera</taxon>
        <taxon>Brachycera</taxon>
        <taxon>Muscomorpha</taxon>
        <taxon>Ephydroidea</taxon>
        <taxon>Drosophilidae</taxon>
        <taxon>Drosophila</taxon>
        <taxon>Sophophora</taxon>
    </lineage>
</organism>
<name>ROA1_DROME</name>
<evidence type="ECO:0000250" key="1"/>
<evidence type="ECO:0000255" key="2">
    <source>
        <dbReference type="PROSITE-ProRule" id="PRU00176"/>
    </source>
</evidence>
<evidence type="ECO:0000256" key="3">
    <source>
        <dbReference type="SAM" id="MobiDB-lite"/>
    </source>
</evidence>
<evidence type="ECO:0000269" key="4">
    <source>
    </source>
</evidence>
<evidence type="ECO:0000303" key="5">
    <source>
    </source>
</evidence>
<evidence type="ECO:0000303" key="6">
    <source>
    </source>
</evidence>